<gene>
    <name evidence="1" type="primary">rplI</name>
    <name type="ordered locus">BruAb1_0474</name>
</gene>
<accession>Q57ER5</accession>
<dbReference type="EMBL" id="AE017223">
    <property type="protein sequence ID" value="AAX73869.1"/>
    <property type="molecule type" value="Genomic_DNA"/>
</dbReference>
<dbReference type="RefSeq" id="WP_002963608.1">
    <property type="nucleotide sequence ID" value="NC_006932.1"/>
</dbReference>
<dbReference type="SMR" id="Q57ER5"/>
<dbReference type="EnsemblBacteria" id="AAX73869">
    <property type="protein sequence ID" value="AAX73869"/>
    <property type="gene ID" value="BruAb1_0474"/>
</dbReference>
<dbReference type="GeneID" id="97534178"/>
<dbReference type="KEGG" id="bmb:BruAb1_0474"/>
<dbReference type="HOGENOM" id="CLU_078938_1_0_5"/>
<dbReference type="Proteomes" id="UP000000540">
    <property type="component" value="Chromosome I"/>
</dbReference>
<dbReference type="GO" id="GO:1990904">
    <property type="term" value="C:ribonucleoprotein complex"/>
    <property type="evidence" value="ECO:0007669"/>
    <property type="project" value="UniProtKB-KW"/>
</dbReference>
<dbReference type="GO" id="GO:0005840">
    <property type="term" value="C:ribosome"/>
    <property type="evidence" value="ECO:0007669"/>
    <property type="project" value="UniProtKB-KW"/>
</dbReference>
<dbReference type="GO" id="GO:0019843">
    <property type="term" value="F:rRNA binding"/>
    <property type="evidence" value="ECO:0007669"/>
    <property type="project" value="UniProtKB-UniRule"/>
</dbReference>
<dbReference type="GO" id="GO:0003735">
    <property type="term" value="F:structural constituent of ribosome"/>
    <property type="evidence" value="ECO:0007669"/>
    <property type="project" value="InterPro"/>
</dbReference>
<dbReference type="GO" id="GO:0006412">
    <property type="term" value="P:translation"/>
    <property type="evidence" value="ECO:0007669"/>
    <property type="project" value="UniProtKB-UniRule"/>
</dbReference>
<dbReference type="Gene3D" id="3.10.430.100">
    <property type="entry name" value="Ribosomal protein L9, C-terminal domain"/>
    <property type="match status" value="1"/>
</dbReference>
<dbReference type="Gene3D" id="3.40.5.10">
    <property type="entry name" value="Ribosomal protein L9, N-terminal domain"/>
    <property type="match status" value="1"/>
</dbReference>
<dbReference type="HAMAP" id="MF_00503">
    <property type="entry name" value="Ribosomal_bL9"/>
    <property type="match status" value="1"/>
</dbReference>
<dbReference type="InterPro" id="IPR000244">
    <property type="entry name" value="Ribosomal_bL9"/>
</dbReference>
<dbReference type="InterPro" id="IPR009027">
    <property type="entry name" value="Ribosomal_bL9/RNase_H1_N"/>
</dbReference>
<dbReference type="InterPro" id="IPR020594">
    <property type="entry name" value="Ribosomal_bL9_bac/chp"/>
</dbReference>
<dbReference type="InterPro" id="IPR020069">
    <property type="entry name" value="Ribosomal_bL9_C"/>
</dbReference>
<dbReference type="InterPro" id="IPR036791">
    <property type="entry name" value="Ribosomal_bL9_C_sf"/>
</dbReference>
<dbReference type="InterPro" id="IPR020070">
    <property type="entry name" value="Ribosomal_bL9_N"/>
</dbReference>
<dbReference type="InterPro" id="IPR036935">
    <property type="entry name" value="Ribosomal_bL9_N_sf"/>
</dbReference>
<dbReference type="NCBIfam" id="TIGR00158">
    <property type="entry name" value="L9"/>
    <property type="match status" value="1"/>
</dbReference>
<dbReference type="PANTHER" id="PTHR21368">
    <property type="entry name" value="50S RIBOSOMAL PROTEIN L9"/>
    <property type="match status" value="1"/>
</dbReference>
<dbReference type="Pfam" id="PF03948">
    <property type="entry name" value="Ribosomal_L9_C"/>
    <property type="match status" value="1"/>
</dbReference>
<dbReference type="Pfam" id="PF01281">
    <property type="entry name" value="Ribosomal_L9_N"/>
    <property type="match status" value="1"/>
</dbReference>
<dbReference type="SUPFAM" id="SSF55658">
    <property type="entry name" value="L9 N-domain-like"/>
    <property type="match status" value="1"/>
</dbReference>
<dbReference type="SUPFAM" id="SSF55653">
    <property type="entry name" value="Ribosomal protein L9 C-domain"/>
    <property type="match status" value="1"/>
</dbReference>
<dbReference type="PROSITE" id="PS00651">
    <property type="entry name" value="RIBOSOMAL_L9"/>
    <property type="match status" value="1"/>
</dbReference>
<keyword id="KW-0687">Ribonucleoprotein</keyword>
<keyword id="KW-0689">Ribosomal protein</keyword>
<keyword id="KW-0694">RNA-binding</keyword>
<keyword id="KW-0699">rRNA-binding</keyword>
<organism>
    <name type="scientific">Brucella abortus biovar 1 (strain 9-941)</name>
    <dbReference type="NCBI Taxonomy" id="262698"/>
    <lineage>
        <taxon>Bacteria</taxon>
        <taxon>Pseudomonadati</taxon>
        <taxon>Pseudomonadota</taxon>
        <taxon>Alphaproteobacteria</taxon>
        <taxon>Hyphomicrobiales</taxon>
        <taxon>Brucellaceae</taxon>
        <taxon>Brucella/Ochrobactrum group</taxon>
        <taxon>Brucella</taxon>
    </lineage>
</organism>
<name>RL9_BRUAB</name>
<protein>
    <recommendedName>
        <fullName evidence="1">Large ribosomal subunit protein bL9</fullName>
    </recommendedName>
    <alternativeName>
        <fullName evidence="2">50S ribosomal protein L9</fullName>
    </alternativeName>
</protein>
<proteinExistence type="inferred from homology"/>
<feature type="chain" id="PRO_0000236495" description="Large ribosomal subunit protein bL9">
    <location>
        <begin position="1"/>
        <end position="189"/>
    </location>
</feature>
<sequence length="189" mass="20970">MEVILLERIGRLGQMGDTVKVKDGYARNFLLPQGKALRANEANKKKFEGQRAQLEAQNLERKNEAQAVADKLNGESFIVVRSAGETGQLYGSVSTRDIAEIITANGFTLHRNQVELNHPIKTIGLHEVSVSLHPEVQVKVMVNIARSTEEAERQAKGEDLTSIEAIYGIEEQPLSEEVFDDEDEAEDQA</sequence>
<reference key="1">
    <citation type="journal article" date="2005" name="J. Bacteriol.">
        <title>Completion of the genome sequence of Brucella abortus and comparison to the highly similar genomes of Brucella melitensis and Brucella suis.</title>
        <authorList>
            <person name="Halling S.M."/>
            <person name="Peterson-Burch B.D."/>
            <person name="Bricker B.J."/>
            <person name="Zuerner R.L."/>
            <person name="Qing Z."/>
            <person name="Li L.-L."/>
            <person name="Kapur V."/>
            <person name="Alt D.P."/>
            <person name="Olsen S.C."/>
        </authorList>
    </citation>
    <scope>NUCLEOTIDE SEQUENCE [LARGE SCALE GENOMIC DNA]</scope>
    <source>
        <strain>9-941</strain>
    </source>
</reference>
<comment type="function">
    <text evidence="1">Binds to the 23S rRNA.</text>
</comment>
<comment type="similarity">
    <text evidence="1">Belongs to the bacterial ribosomal protein bL9 family.</text>
</comment>
<evidence type="ECO:0000255" key="1">
    <source>
        <dbReference type="HAMAP-Rule" id="MF_00503"/>
    </source>
</evidence>
<evidence type="ECO:0000305" key="2"/>